<sequence length="122" mass="13425">MLTKPDRKAIRAKRRRRVRNKILGTAARPRLNVFRSLNNMYAQLIDDETGVTVVAASTLSPELKETFKNGGNVEAAKAVGDLVGKLALEKGIKEVVFDRAGYLYHGRVKALAEAAREAGLDF</sequence>
<reference key="1">
    <citation type="submission" date="2007-03" db="EMBL/GenBank/DDBJ databases">
        <title>Complete sequence of Desulfotomaculum reducens MI-1.</title>
        <authorList>
            <consortium name="US DOE Joint Genome Institute"/>
            <person name="Copeland A."/>
            <person name="Lucas S."/>
            <person name="Lapidus A."/>
            <person name="Barry K."/>
            <person name="Detter J.C."/>
            <person name="Glavina del Rio T."/>
            <person name="Hammon N."/>
            <person name="Israni S."/>
            <person name="Dalin E."/>
            <person name="Tice H."/>
            <person name="Pitluck S."/>
            <person name="Sims D."/>
            <person name="Brettin T."/>
            <person name="Bruce D."/>
            <person name="Han C."/>
            <person name="Tapia R."/>
            <person name="Schmutz J."/>
            <person name="Larimer F."/>
            <person name="Land M."/>
            <person name="Hauser L."/>
            <person name="Kyrpides N."/>
            <person name="Kim E."/>
            <person name="Tebo B.M."/>
            <person name="Richardson P."/>
        </authorList>
    </citation>
    <scope>NUCLEOTIDE SEQUENCE [LARGE SCALE GENOMIC DNA]</scope>
    <source>
        <strain>ATCC BAA-1160 / DSM 100696 / MI-1</strain>
    </source>
</reference>
<proteinExistence type="inferred from homology"/>
<feature type="chain" id="PRO_1000073305" description="Large ribosomal subunit protein uL18">
    <location>
        <begin position="1"/>
        <end position="122"/>
    </location>
</feature>
<dbReference type="EMBL" id="CP000612">
    <property type="protein sequence ID" value="ABO48780.1"/>
    <property type="molecule type" value="Genomic_DNA"/>
</dbReference>
<dbReference type="RefSeq" id="WP_011876620.1">
    <property type="nucleotide sequence ID" value="NC_009253.1"/>
</dbReference>
<dbReference type="SMR" id="A4J127"/>
<dbReference type="STRING" id="349161.Dred_0231"/>
<dbReference type="KEGG" id="drm:Dred_0231"/>
<dbReference type="eggNOG" id="COG0256">
    <property type="taxonomic scope" value="Bacteria"/>
</dbReference>
<dbReference type="HOGENOM" id="CLU_098841_0_1_9"/>
<dbReference type="OrthoDB" id="9810939at2"/>
<dbReference type="Proteomes" id="UP000001556">
    <property type="component" value="Chromosome"/>
</dbReference>
<dbReference type="GO" id="GO:0022625">
    <property type="term" value="C:cytosolic large ribosomal subunit"/>
    <property type="evidence" value="ECO:0007669"/>
    <property type="project" value="TreeGrafter"/>
</dbReference>
<dbReference type="GO" id="GO:0008097">
    <property type="term" value="F:5S rRNA binding"/>
    <property type="evidence" value="ECO:0007669"/>
    <property type="project" value="TreeGrafter"/>
</dbReference>
<dbReference type="GO" id="GO:0003735">
    <property type="term" value="F:structural constituent of ribosome"/>
    <property type="evidence" value="ECO:0007669"/>
    <property type="project" value="InterPro"/>
</dbReference>
<dbReference type="GO" id="GO:0006412">
    <property type="term" value="P:translation"/>
    <property type="evidence" value="ECO:0007669"/>
    <property type="project" value="UniProtKB-UniRule"/>
</dbReference>
<dbReference type="CDD" id="cd00432">
    <property type="entry name" value="Ribosomal_L18_L5e"/>
    <property type="match status" value="1"/>
</dbReference>
<dbReference type="FunFam" id="3.30.420.100:FF:000001">
    <property type="entry name" value="50S ribosomal protein L18"/>
    <property type="match status" value="1"/>
</dbReference>
<dbReference type="Gene3D" id="3.30.420.100">
    <property type="match status" value="1"/>
</dbReference>
<dbReference type="HAMAP" id="MF_01337_B">
    <property type="entry name" value="Ribosomal_uL18_B"/>
    <property type="match status" value="1"/>
</dbReference>
<dbReference type="InterPro" id="IPR004389">
    <property type="entry name" value="Ribosomal_uL18_bac-type"/>
</dbReference>
<dbReference type="InterPro" id="IPR005484">
    <property type="entry name" value="Ribosomal_uL18_bac/euk"/>
</dbReference>
<dbReference type="NCBIfam" id="TIGR00060">
    <property type="entry name" value="L18_bact"/>
    <property type="match status" value="1"/>
</dbReference>
<dbReference type="PANTHER" id="PTHR12899">
    <property type="entry name" value="39S RIBOSOMAL PROTEIN L18, MITOCHONDRIAL"/>
    <property type="match status" value="1"/>
</dbReference>
<dbReference type="PANTHER" id="PTHR12899:SF3">
    <property type="entry name" value="LARGE RIBOSOMAL SUBUNIT PROTEIN UL18M"/>
    <property type="match status" value="1"/>
</dbReference>
<dbReference type="Pfam" id="PF00861">
    <property type="entry name" value="Ribosomal_L18p"/>
    <property type="match status" value="1"/>
</dbReference>
<dbReference type="SUPFAM" id="SSF53137">
    <property type="entry name" value="Translational machinery components"/>
    <property type="match status" value="1"/>
</dbReference>
<gene>
    <name evidence="1" type="primary">rplR</name>
    <name type="ordered locus">Dred_0231</name>
</gene>
<keyword id="KW-1185">Reference proteome</keyword>
<keyword id="KW-0687">Ribonucleoprotein</keyword>
<keyword id="KW-0689">Ribosomal protein</keyword>
<keyword id="KW-0694">RNA-binding</keyword>
<keyword id="KW-0699">rRNA-binding</keyword>
<name>RL18_DESRM</name>
<comment type="function">
    <text evidence="1">This is one of the proteins that bind and probably mediate the attachment of the 5S RNA into the large ribosomal subunit, where it forms part of the central protuberance.</text>
</comment>
<comment type="subunit">
    <text evidence="1">Part of the 50S ribosomal subunit; part of the 5S rRNA/L5/L18/L25 subcomplex. Contacts the 5S and 23S rRNAs.</text>
</comment>
<comment type="similarity">
    <text evidence="1">Belongs to the universal ribosomal protein uL18 family.</text>
</comment>
<organism>
    <name type="scientific">Desulforamulus reducens (strain ATCC BAA-1160 / DSM 100696 / MI-1)</name>
    <name type="common">Desulfotomaculum reducens</name>
    <dbReference type="NCBI Taxonomy" id="349161"/>
    <lineage>
        <taxon>Bacteria</taxon>
        <taxon>Bacillati</taxon>
        <taxon>Bacillota</taxon>
        <taxon>Clostridia</taxon>
        <taxon>Eubacteriales</taxon>
        <taxon>Peptococcaceae</taxon>
        <taxon>Desulforamulus</taxon>
    </lineage>
</organism>
<protein>
    <recommendedName>
        <fullName evidence="1">Large ribosomal subunit protein uL18</fullName>
    </recommendedName>
    <alternativeName>
        <fullName evidence="2">50S ribosomal protein L18</fullName>
    </alternativeName>
</protein>
<accession>A4J127</accession>
<evidence type="ECO:0000255" key="1">
    <source>
        <dbReference type="HAMAP-Rule" id="MF_01337"/>
    </source>
</evidence>
<evidence type="ECO:0000305" key="2"/>